<feature type="chain" id="PRO_0000203970" description="Sulfofructosephosphate aldolase">
    <location>
        <begin position="1"/>
        <end position="292"/>
    </location>
</feature>
<feature type="active site" description="Schiff-base intermediate with substrate" evidence="1">
    <location>
        <position position="193"/>
    </location>
</feature>
<organism>
    <name type="scientific">Escherichia coli O157:H7</name>
    <dbReference type="NCBI Taxonomy" id="83334"/>
    <lineage>
        <taxon>Bacteria</taxon>
        <taxon>Pseudomonadati</taxon>
        <taxon>Pseudomonadota</taxon>
        <taxon>Gammaproteobacteria</taxon>
        <taxon>Enterobacterales</taxon>
        <taxon>Enterobacteriaceae</taxon>
        <taxon>Escherichia</taxon>
    </lineage>
</organism>
<name>SQUT_ECO57</name>
<proteinExistence type="inferred from homology"/>
<reference key="1">
    <citation type="journal article" date="2001" name="Nature">
        <title>Genome sequence of enterohaemorrhagic Escherichia coli O157:H7.</title>
        <authorList>
            <person name="Perna N.T."/>
            <person name="Plunkett G. III"/>
            <person name="Burland V."/>
            <person name="Mau B."/>
            <person name="Glasner J.D."/>
            <person name="Rose D.J."/>
            <person name="Mayhew G.F."/>
            <person name="Evans P.S."/>
            <person name="Gregor J."/>
            <person name="Kirkpatrick H.A."/>
            <person name="Posfai G."/>
            <person name="Hackett J."/>
            <person name="Klink S."/>
            <person name="Boutin A."/>
            <person name="Shao Y."/>
            <person name="Miller L."/>
            <person name="Grotbeck E.J."/>
            <person name="Davis N.W."/>
            <person name="Lim A."/>
            <person name="Dimalanta E.T."/>
            <person name="Potamousis K."/>
            <person name="Apodaca J."/>
            <person name="Anantharaman T.S."/>
            <person name="Lin J."/>
            <person name="Yen G."/>
            <person name="Schwartz D.C."/>
            <person name="Welch R.A."/>
            <person name="Blattner F.R."/>
        </authorList>
    </citation>
    <scope>NUCLEOTIDE SEQUENCE [LARGE SCALE GENOMIC DNA]</scope>
    <source>
        <strain>O157:H7 / EDL933 / ATCC 700927 / EHEC</strain>
    </source>
</reference>
<reference key="2">
    <citation type="journal article" date="2001" name="DNA Res.">
        <title>Complete genome sequence of enterohemorrhagic Escherichia coli O157:H7 and genomic comparison with a laboratory strain K-12.</title>
        <authorList>
            <person name="Hayashi T."/>
            <person name="Makino K."/>
            <person name="Ohnishi M."/>
            <person name="Kurokawa K."/>
            <person name="Ishii K."/>
            <person name="Yokoyama K."/>
            <person name="Han C.-G."/>
            <person name="Ohtsubo E."/>
            <person name="Nakayama K."/>
            <person name="Murata T."/>
            <person name="Tanaka M."/>
            <person name="Tobe T."/>
            <person name="Iida T."/>
            <person name="Takami H."/>
            <person name="Honda T."/>
            <person name="Sasakawa C."/>
            <person name="Ogasawara N."/>
            <person name="Yasunaga T."/>
            <person name="Kuhara S."/>
            <person name="Shiba T."/>
            <person name="Hattori M."/>
            <person name="Shinagawa H."/>
        </authorList>
    </citation>
    <scope>NUCLEOTIDE SEQUENCE [LARGE SCALE GENOMIC DNA]</scope>
    <source>
        <strain>O157:H7 / Sakai / RIMD 0509952 / EHEC</strain>
    </source>
</reference>
<dbReference type="EC" id="4.1.2.57" evidence="1"/>
<dbReference type="EMBL" id="AE005174">
    <property type="protein sequence ID" value="AAG59071.1"/>
    <property type="molecule type" value="Genomic_DNA"/>
</dbReference>
<dbReference type="EMBL" id="BA000007">
    <property type="protein sequence ID" value="BAB38227.1"/>
    <property type="molecule type" value="Genomic_DNA"/>
</dbReference>
<dbReference type="PIR" id="C86076">
    <property type="entry name" value="C86076"/>
</dbReference>
<dbReference type="PIR" id="D91229">
    <property type="entry name" value="D91229"/>
</dbReference>
<dbReference type="RefSeq" id="NP_312831.1">
    <property type="nucleotide sequence ID" value="NC_002695.1"/>
</dbReference>
<dbReference type="RefSeq" id="WP_001046461.1">
    <property type="nucleotide sequence ID" value="NZ_VOAI01000016.1"/>
</dbReference>
<dbReference type="SMR" id="Q8X8D5"/>
<dbReference type="STRING" id="155864.Z5418"/>
<dbReference type="GeneID" id="75174117"/>
<dbReference type="GeneID" id="915094"/>
<dbReference type="KEGG" id="ece:Z5418"/>
<dbReference type="KEGG" id="ecs:ECs_4804"/>
<dbReference type="PATRIC" id="fig|386585.9.peg.5019"/>
<dbReference type="eggNOG" id="COG3684">
    <property type="taxonomic scope" value="Bacteria"/>
</dbReference>
<dbReference type="HOGENOM" id="CLU_083300_0_0_6"/>
<dbReference type="OMA" id="CIKILLY"/>
<dbReference type="Proteomes" id="UP000000558">
    <property type="component" value="Chromosome"/>
</dbReference>
<dbReference type="Proteomes" id="UP000002519">
    <property type="component" value="Chromosome"/>
</dbReference>
<dbReference type="GO" id="GO:0061595">
    <property type="term" value="F:6-deoxy-6-sulfofructose-1-phosphate aldolase activity"/>
    <property type="evidence" value="ECO:0007669"/>
    <property type="project" value="UniProtKB-UniRule"/>
</dbReference>
<dbReference type="GO" id="GO:1902777">
    <property type="term" value="P:6-sulfoquinovose(1-) catabolic process"/>
    <property type="evidence" value="ECO:0007669"/>
    <property type="project" value="UniProtKB-UniRule"/>
</dbReference>
<dbReference type="FunFam" id="3.20.20.70:FF:000089">
    <property type="entry name" value="Sulfofructosephosphate aldolase"/>
    <property type="match status" value="1"/>
</dbReference>
<dbReference type="Gene3D" id="3.20.20.70">
    <property type="entry name" value="Aldolase class I"/>
    <property type="match status" value="1"/>
</dbReference>
<dbReference type="HAMAP" id="MF_01912">
    <property type="entry name" value="SFP_aldolase"/>
    <property type="match status" value="1"/>
</dbReference>
<dbReference type="InterPro" id="IPR013785">
    <property type="entry name" value="Aldolase_TIM"/>
</dbReference>
<dbReference type="InterPro" id="IPR002915">
    <property type="entry name" value="DeoC/FbaB/LacD_aldolase"/>
</dbReference>
<dbReference type="InterPro" id="IPR050552">
    <property type="entry name" value="LacD_aldolase"/>
</dbReference>
<dbReference type="InterPro" id="IPR017291">
    <property type="entry name" value="SFP_aldolase_YihT"/>
</dbReference>
<dbReference type="PANTHER" id="PTHR39340">
    <property type="entry name" value="SULFOFRUCTOSEPHOSPHATE ALDOLASE"/>
    <property type="match status" value="1"/>
</dbReference>
<dbReference type="PANTHER" id="PTHR39340:SF1">
    <property type="entry name" value="SULFOFRUCTOSEPHOSPHATE ALDOLASE"/>
    <property type="match status" value="1"/>
</dbReference>
<dbReference type="Pfam" id="PF01791">
    <property type="entry name" value="DeoC"/>
    <property type="match status" value="1"/>
</dbReference>
<dbReference type="PIRSF" id="PIRSF037840">
    <property type="entry name" value="Aldolase_YihT"/>
    <property type="match status" value="1"/>
</dbReference>
<dbReference type="SMART" id="SM01133">
    <property type="entry name" value="DeoC"/>
    <property type="match status" value="1"/>
</dbReference>
<dbReference type="SUPFAM" id="SSF51569">
    <property type="entry name" value="Aldolase"/>
    <property type="match status" value="1"/>
</dbReference>
<comment type="function">
    <text evidence="1">Cleaves 6-deoxy-6-sulfo-D-fructose 1-phosphate (SFP) to form dihydroxyacetone phosphate (DHAP) and 3-sulfolactaldehyde (SLA).</text>
</comment>
<comment type="catalytic activity">
    <reaction evidence="1">
        <text>6-deoxy-6-sulfo-D-fructose 1-phosphate = (2S)-3-sulfolactaldehyde + dihydroxyacetone phosphate</text>
        <dbReference type="Rhea" id="RHEA:40515"/>
        <dbReference type="ChEBI" id="CHEBI:57642"/>
        <dbReference type="ChEBI" id="CHEBI:77134"/>
        <dbReference type="ChEBI" id="CHEBI:90109"/>
        <dbReference type="EC" id="4.1.2.57"/>
    </reaction>
    <physiologicalReaction direction="left-to-right" evidence="1">
        <dbReference type="Rhea" id="RHEA:40516"/>
    </physiologicalReaction>
</comment>
<comment type="subunit">
    <text evidence="1">Homotetramer.</text>
</comment>
<comment type="similarity">
    <text evidence="1">Belongs to the aldolase LacD family.</text>
</comment>
<sequence>MNKYTINDITRASGGFAMLAVDQREAMRMMFAAAGAPAPVADSVLTDFKVNAAKTLSPYASAILVDQQFCYRQVVEQNAIAKSCAMIVAADEFIPGNGIPVDSVVIDRKINPLQIKQDGGKALKLLVLWRSDEDAQQRLDMVKEFNELCHSHGLVSIIEPVVRPPRRGDKFDREQAIIDAAKELGDSGADLYKVEMPLYGKGPQQELLSASQRLNDHINMPWVILSSGVDEKLFPRAVRVAMTAGASGFLAGRAVWASVVGLPDNELMLRDVCAPKLQQLGDIVDEMMAKRR</sequence>
<keyword id="KW-0119">Carbohydrate metabolism</keyword>
<keyword id="KW-0456">Lyase</keyword>
<keyword id="KW-1185">Reference proteome</keyword>
<keyword id="KW-0704">Schiff base</keyword>
<accession>Q8X8D5</accession>
<gene>
    <name type="primary">yihT</name>
    <name type="ordered locus">Z5418</name>
    <name type="ordered locus">ECs4804</name>
</gene>
<protein>
    <recommendedName>
        <fullName evidence="1">Sulfofructosephosphate aldolase</fullName>
        <shortName evidence="1">SFP aldolase</shortName>
        <ecNumber evidence="1">4.1.2.57</ecNumber>
    </recommendedName>
</protein>
<evidence type="ECO:0000255" key="1">
    <source>
        <dbReference type="HAMAP-Rule" id="MF_01912"/>
    </source>
</evidence>